<accession>A6U0Z7</accession>
<proteinExistence type="inferred from homology"/>
<organism>
    <name type="scientific">Staphylococcus aureus (strain JH1)</name>
    <dbReference type="NCBI Taxonomy" id="359787"/>
    <lineage>
        <taxon>Bacteria</taxon>
        <taxon>Bacillati</taxon>
        <taxon>Bacillota</taxon>
        <taxon>Bacilli</taxon>
        <taxon>Bacillales</taxon>
        <taxon>Staphylococcaceae</taxon>
        <taxon>Staphylococcus</taxon>
    </lineage>
</organism>
<reference key="1">
    <citation type="submission" date="2007-06" db="EMBL/GenBank/DDBJ databases">
        <title>Complete sequence of chromosome of Staphylococcus aureus subsp. aureus JH1.</title>
        <authorList>
            <consortium name="US DOE Joint Genome Institute"/>
            <person name="Copeland A."/>
            <person name="Lucas S."/>
            <person name="Lapidus A."/>
            <person name="Barry K."/>
            <person name="Detter J.C."/>
            <person name="Glavina del Rio T."/>
            <person name="Hammon N."/>
            <person name="Israni S."/>
            <person name="Dalin E."/>
            <person name="Tice H."/>
            <person name="Pitluck S."/>
            <person name="Chain P."/>
            <person name="Malfatti S."/>
            <person name="Shin M."/>
            <person name="Vergez L."/>
            <person name="Schmutz J."/>
            <person name="Larimer F."/>
            <person name="Land M."/>
            <person name="Hauser L."/>
            <person name="Kyrpides N."/>
            <person name="Ivanova N."/>
            <person name="Tomasz A."/>
            <person name="Richardson P."/>
        </authorList>
    </citation>
    <scope>NUCLEOTIDE SEQUENCE [LARGE SCALE GENOMIC DNA]</scope>
    <source>
        <strain>JH1</strain>
    </source>
</reference>
<protein>
    <recommendedName>
        <fullName evidence="1">Putative cysteine ligase BshC</fullName>
        <ecNumber evidence="1">6.-.-.-</ecNumber>
    </recommendedName>
</protein>
<sequence length="537" mass="62834">MDCKVVSLNEKDQFIPKIKSSDPVITGLFQYDAAQQTSFEKRMSKENNGREAALANVIREYMSDLKLSNEQELNIQHLANGSKVVIGGQQAGLFGGPLYTFHKIFSIITLSKELTDTHKQQVVPVFWIAGEDHDFDEVNHTFVYNENHGSLHKVKYHTMEMPETTVSRYYPDKAELKQTLKTMFIHMKETVHTQGLLEICDRIIDQYDSWTDMFKALLHETFKAYGVLFIDAQFEPLRKMEAPMFKKILKKHQLLDDAFRATQQRTQNQGLNAMIQTDTNVHLFLHDENMRQLVSYDGKHFKLNKTDKTYIKEEIINIAENQPELFSNNVVTRPLMEEWLFNTVAFVGGPSEIKYWAELKDVFELFDVEMPIVMPRLRITYLNDRIEKLLSKYNIPLEKVLVDGVEGERSKFIREQASHQFIEKVEGMIEQQRRLNKDLLDEVAGNQNNINLVNKNNEIHIQQYDYLLKRYLLNIERENDISMKQFREIQETLHPMGGLQERIWNPLQILNDFGTDVFKPSTYPPLSYTFDHIIIKP</sequence>
<comment type="function">
    <text evidence="1">Involved in bacillithiol (BSH) biosynthesis. May catalyze the last step of the pathway, the addition of cysteine to glucosamine malate (GlcN-Mal) to generate BSH.</text>
</comment>
<comment type="similarity">
    <text evidence="1">Belongs to the BshC family.</text>
</comment>
<evidence type="ECO:0000255" key="1">
    <source>
        <dbReference type="HAMAP-Rule" id="MF_01867"/>
    </source>
</evidence>
<dbReference type="EC" id="6.-.-.-" evidence="1"/>
<dbReference type="EMBL" id="CP000736">
    <property type="protein sequence ID" value="ABR52115.1"/>
    <property type="molecule type" value="Genomic_DNA"/>
</dbReference>
<dbReference type="SMR" id="A6U0Z7"/>
<dbReference type="KEGG" id="sah:SaurJH1_1261"/>
<dbReference type="HOGENOM" id="CLU_022249_0_0_9"/>
<dbReference type="GO" id="GO:0016874">
    <property type="term" value="F:ligase activity"/>
    <property type="evidence" value="ECO:0007669"/>
    <property type="project" value="UniProtKB-UniRule"/>
</dbReference>
<dbReference type="HAMAP" id="MF_01867">
    <property type="entry name" value="BshC"/>
    <property type="match status" value="1"/>
</dbReference>
<dbReference type="InterPro" id="IPR011199">
    <property type="entry name" value="Bacillithiol_biosynth_BshC"/>
</dbReference>
<dbReference type="InterPro" id="IPR055399">
    <property type="entry name" value="CC_BshC"/>
</dbReference>
<dbReference type="InterPro" id="IPR055398">
    <property type="entry name" value="Rossmann-like_BshC"/>
</dbReference>
<dbReference type="NCBIfam" id="TIGR03998">
    <property type="entry name" value="thiol_BshC"/>
    <property type="match status" value="1"/>
</dbReference>
<dbReference type="Pfam" id="PF24850">
    <property type="entry name" value="CC_BshC"/>
    <property type="match status" value="1"/>
</dbReference>
<dbReference type="Pfam" id="PF10079">
    <property type="entry name" value="Rossmann-like_BshC"/>
    <property type="match status" value="1"/>
</dbReference>
<dbReference type="PIRSF" id="PIRSF012535">
    <property type="entry name" value="UCP012535"/>
    <property type="match status" value="1"/>
</dbReference>
<feature type="chain" id="PRO_0000378254" description="Putative cysteine ligase BshC">
    <location>
        <begin position="1"/>
        <end position="537"/>
    </location>
</feature>
<feature type="coiled-coil region" evidence="1">
    <location>
        <begin position="422"/>
        <end position="450"/>
    </location>
</feature>
<name>BSHC_STAA2</name>
<gene>
    <name evidence="1" type="primary">bshC</name>
    <name type="ordered locus">SaurJH1_1261</name>
</gene>
<keyword id="KW-0175">Coiled coil</keyword>
<keyword id="KW-0436">Ligase</keyword>